<keyword id="KW-0025">Alternative splicing</keyword>
<keyword id="KW-1003">Cell membrane</keyword>
<keyword id="KW-0265">Erythrocyte maturation</keyword>
<keyword id="KW-0325">Glycoprotein</keyword>
<keyword id="KW-0472">Membrane</keyword>
<keyword id="KW-0496">Mitochondrion</keyword>
<keyword id="KW-0597">Phosphoprotein</keyword>
<keyword id="KW-0675">Receptor</keyword>
<keyword id="KW-1185">Reference proteome</keyword>
<keyword id="KW-0812">Transmembrane</keyword>
<keyword id="KW-1133">Transmembrane helix</keyword>
<keyword id="KW-0813">Transport</keyword>
<organism>
    <name type="scientific">Mus musculus</name>
    <name type="common">Mouse</name>
    <dbReference type="NCBI Taxonomy" id="10090"/>
    <lineage>
        <taxon>Eukaryota</taxon>
        <taxon>Metazoa</taxon>
        <taxon>Chordata</taxon>
        <taxon>Craniata</taxon>
        <taxon>Vertebrata</taxon>
        <taxon>Euteleostomi</taxon>
        <taxon>Mammalia</taxon>
        <taxon>Eutheria</taxon>
        <taxon>Euarchontoglires</taxon>
        <taxon>Glires</taxon>
        <taxon>Rodentia</taxon>
        <taxon>Myomorpha</taxon>
        <taxon>Muroidea</taxon>
        <taxon>Muridae</taxon>
        <taxon>Murinae</taxon>
        <taxon>Mus</taxon>
        <taxon>Mus</taxon>
    </lineage>
</organism>
<feature type="chain" id="PRO_0000423424" description="Choline/ethanolamine transporter FLVCR1">
    <location>
        <begin position="1"/>
        <end position="560"/>
    </location>
</feature>
<feature type="topological domain" description="Cytoplasmic" evidence="1">
    <location>
        <begin position="1"/>
        <end position="92"/>
    </location>
</feature>
<feature type="transmembrane region" description="Helical; Name=TM1" evidence="1">
    <location>
        <begin position="93"/>
        <end position="117"/>
    </location>
</feature>
<feature type="topological domain" description="Extracellular" evidence="1">
    <location>
        <begin position="118"/>
        <end position="135"/>
    </location>
</feature>
<feature type="transmembrane region" description="Helical; Name=TM2" evidence="1">
    <location>
        <begin position="136"/>
        <end position="163"/>
    </location>
</feature>
<feature type="topological domain" description="Cytoplasmic" evidence="1">
    <location>
        <begin position="164"/>
        <end position="165"/>
    </location>
</feature>
<feature type="transmembrane region" description="Helical; Name=TM3" evidence="1">
    <location>
        <begin position="166"/>
        <end position="185"/>
    </location>
</feature>
<feature type="topological domain" description="Extracellular" evidence="1">
    <location>
        <begin position="186"/>
        <end position="192"/>
    </location>
</feature>
<feature type="transmembrane region" description="Helical; Name=TM4" evidence="1">
    <location>
        <begin position="193"/>
        <end position="221"/>
    </location>
</feature>
<feature type="topological domain" description="Cytoplasmic" evidence="1">
    <location>
        <begin position="222"/>
        <end position="226"/>
    </location>
</feature>
<feature type="transmembrane region" description="Helical; Name=TM5" evidence="1">
    <location>
        <begin position="227"/>
        <end position="252"/>
    </location>
</feature>
<feature type="topological domain" description="Extracellular" evidence="1">
    <location>
        <begin position="253"/>
        <end position="270"/>
    </location>
</feature>
<feature type="transmembrane region" description="Helical; Name=TM6" evidence="1">
    <location>
        <begin position="271"/>
        <end position="300"/>
    </location>
</feature>
<feature type="topological domain" description="Cytoplasmic" evidence="1">
    <location>
        <begin position="301"/>
        <end position="336"/>
    </location>
</feature>
<feature type="transmembrane region" description="Helical; Name=TM7" evidence="1">
    <location>
        <begin position="337"/>
        <end position="367"/>
    </location>
</feature>
<feature type="topological domain" description="Extracellular" evidence="1">
    <location>
        <begin position="368"/>
        <end position="371"/>
    </location>
</feature>
<feature type="transmembrane region" description="Helical; Name=TM8" evidence="1">
    <location>
        <begin position="372"/>
        <end position="400"/>
    </location>
</feature>
<feature type="topological domain" description="Cytoplasmic" evidence="1">
    <location>
        <begin position="401"/>
        <end position="402"/>
    </location>
</feature>
<feature type="transmembrane region" description="Helical; Name=TM9" evidence="1">
    <location>
        <begin position="403"/>
        <end position="425"/>
    </location>
</feature>
<feature type="topological domain" description="Extracellular" evidence="1 9">
    <location>
        <begin position="426"/>
        <end position="428"/>
    </location>
</feature>
<feature type="transmembrane region" description="Helical; Name=TM10" evidence="1">
    <location>
        <begin position="429"/>
        <end position="458"/>
    </location>
</feature>
<feature type="topological domain" description="Cytoplasmic" evidence="1">
    <location>
        <begin position="459"/>
        <end position="466"/>
    </location>
</feature>
<feature type="transmembrane region" description="Helical; Name=TM11" evidence="1">
    <location>
        <begin position="467"/>
        <end position="492"/>
    </location>
</feature>
<feature type="topological domain" description="Extracellular" evidence="1">
    <location>
        <begin position="493"/>
        <end position="495"/>
    </location>
</feature>
<feature type="transmembrane region" description="Helical; Name=TM12" evidence="1">
    <location>
        <begin position="496"/>
        <end position="518"/>
    </location>
</feature>
<feature type="topological domain" description="Cytoplasmic" evidence="1">
    <location>
        <begin position="519"/>
        <end position="560"/>
    </location>
</feature>
<feature type="region of interest" description="Disordered" evidence="3">
    <location>
        <begin position="1"/>
        <end position="43"/>
    </location>
</feature>
<feature type="binding site" evidence="1">
    <location>
        <position position="207"/>
    </location>
    <ligand>
        <name>ethanolamine</name>
        <dbReference type="ChEBI" id="CHEBI:57603"/>
    </ligand>
</feature>
<feature type="binding site" evidence="1">
    <location>
        <position position="476"/>
    </location>
    <ligand>
        <name>choline</name>
        <dbReference type="ChEBI" id="CHEBI:15354"/>
    </ligand>
</feature>
<feature type="binding site" evidence="1">
    <location>
        <position position="476"/>
    </location>
    <ligand>
        <name>ethanolamine</name>
        <dbReference type="ChEBI" id="CHEBI:57603"/>
    </ligand>
</feature>
<feature type="modified residue" description="Phosphoserine" evidence="1">
    <location>
        <position position="542"/>
    </location>
</feature>
<feature type="glycosylation site" description="N-linked (GlcNAc...) asparagine" evidence="2">
    <location>
        <position position="270"/>
    </location>
</feature>
<feature type="splice variant" id="VSP_047867" description="In isoform 2." evidence="9">
    <location>
        <begin position="1"/>
        <end position="281"/>
    </location>
</feature>
<evidence type="ECO:0000250" key="1">
    <source>
        <dbReference type="UniProtKB" id="Q9Y5Y0"/>
    </source>
</evidence>
<evidence type="ECO:0000255" key="2"/>
<evidence type="ECO:0000256" key="3">
    <source>
        <dbReference type="SAM" id="MobiDB-lite"/>
    </source>
</evidence>
<evidence type="ECO:0000269" key="4">
    <source>
    </source>
</evidence>
<evidence type="ECO:0000269" key="5">
    <source>
    </source>
</evidence>
<evidence type="ECO:0000269" key="6">
    <source>
    </source>
</evidence>
<evidence type="ECO:0000269" key="7">
    <source>
    </source>
</evidence>
<evidence type="ECO:0000303" key="8">
    <source>
    </source>
</evidence>
<evidence type="ECO:0000305" key="9"/>
<evidence type="ECO:0000305" key="10">
    <source>
    </source>
</evidence>
<dbReference type="EMBL" id="AC138229">
    <property type="status" value="NOT_ANNOTATED_CDS"/>
    <property type="molecule type" value="Genomic_DNA"/>
</dbReference>
<dbReference type="EMBL" id="BC157992">
    <property type="protein sequence ID" value="AAI57993.1"/>
    <property type="molecule type" value="mRNA"/>
</dbReference>
<dbReference type="CCDS" id="CCDS35823.1">
    <molecule id="B2RXV4-1"/>
</dbReference>
<dbReference type="RefSeq" id="NP_001074728.1">
    <molecule id="B2RXV4-1"/>
    <property type="nucleotide sequence ID" value="NM_001081259.1"/>
</dbReference>
<dbReference type="RefSeq" id="NP_001300676.1">
    <property type="nucleotide sequence ID" value="NM_001313747.1"/>
</dbReference>
<dbReference type="SMR" id="B2RXV4"/>
<dbReference type="BioGRID" id="230561">
    <property type="interactions" value="2"/>
</dbReference>
<dbReference type="FunCoup" id="B2RXV4">
    <property type="interactions" value="1482"/>
</dbReference>
<dbReference type="STRING" id="10090.ENSMUSP00000082777"/>
<dbReference type="GlyCosmos" id="B2RXV4">
    <property type="glycosylation" value="1 site, No reported glycans"/>
</dbReference>
<dbReference type="GlyGen" id="B2RXV4">
    <property type="glycosylation" value="1 site"/>
</dbReference>
<dbReference type="iPTMnet" id="B2RXV4"/>
<dbReference type="PhosphoSitePlus" id="B2RXV4"/>
<dbReference type="PaxDb" id="10090-ENSMUSP00000082777"/>
<dbReference type="PeptideAtlas" id="B2RXV4"/>
<dbReference type="ProteomicsDB" id="267365">
    <molecule id="B2RXV4-1"/>
</dbReference>
<dbReference type="ProteomicsDB" id="267366">
    <molecule id="B2RXV4-2"/>
</dbReference>
<dbReference type="Antibodypedia" id="20720">
    <property type="antibodies" value="176 antibodies from 31 providers"/>
</dbReference>
<dbReference type="Ensembl" id="ENSMUST00000085635.6">
    <molecule id="B2RXV4-1"/>
    <property type="protein sequence ID" value="ENSMUSP00000082777.5"/>
    <property type="gene ID" value="ENSMUSG00000066595.10"/>
</dbReference>
<dbReference type="GeneID" id="226844"/>
<dbReference type="KEGG" id="mmu:226844"/>
<dbReference type="UCSC" id="uc007ebv.1">
    <molecule id="B2RXV4-1"/>
    <property type="organism name" value="mouse"/>
</dbReference>
<dbReference type="UCSC" id="uc011wyn.1">
    <molecule id="B2RXV4-2"/>
    <property type="organism name" value="mouse"/>
</dbReference>
<dbReference type="AGR" id="MGI:2444881"/>
<dbReference type="CTD" id="28982"/>
<dbReference type="MGI" id="MGI:2444881">
    <property type="gene designation" value="Flvcr1"/>
</dbReference>
<dbReference type="VEuPathDB" id="HostDB:ENSMUSG00000066595"/>
<dbReference type="eggNOG" id="KOG2563">
    <property type="taxonomic scope" value="Eukaryota"/>
</dbReference>
<dbReference type="GeneTree" id="ENSGT01030000234625"/>
<dbReference type="HOGENOM" id="CLU_023132_0_0_1"/>
<dbReference type="InParanoid" id="B2RXV4"/>
<dbReference type="OMA" id="LDLMGHN"/>
<dbReference type="OrthoDB" id="422206at2759"/>
<dbReference type="PhylomeDB" id="B2RXV4"/>
<dbReference type="TreeFam" id="TF314292"/>
<dbReference type="Reactome" id="R-MMU-189451">
    <property type="pathway name" value="Heme biosynthesis"/>
</dbReference>
<dbReference type="Reactome" id="R-MMU-917937">
    <property type="pathway name" value="Iron uptake and transport"/>
</dbReference>
<dbReference type="BioGRID-ORCS" id="226844">
    <property type="hits" value="14 hits in 83 CRISPR screens"/>
</dbReference>
<dbReference type="ChiTaRS" id="Flvcr1">
    <property type="organism name" value="mouse"/>
</dbReference>
<dbReference type="PRO" id="PR:B2RXV4"/>
<dbReference type="Proteomes" id="UP000000589">
    <property type="component" value="Chromosome 1"/>
</dbReference>
<dbReference type="RNAct" id="B2RXV4">
    <property type="molecule type" value="protein"/>
</dbReference>
<dbReference type="Bgee" id="ENSMUSG00000066595">
    <property type="expression patterns" value="Expressed in epithelium of small intestine and 218 other cell types or tissues"/>
</dbReference>
<dbReference type="ExpressionAtlas" id="B2RXV4">
    <property type="expression patterns" value="baseline and differential"/>
</dbReference>
<dbReference type="GO" id="GO:0031966">
    <property type="term" value="C:mitochondrial membrane"/>
    <property type="evidence" value="ECO:0000314"/>
    <property type="project" value="UniProtKB"/>
</dbReference>
<dbReference type="GO" id="GO:0005739">
    <property type="term" value="C:mitochondrion"/>
    <property type="evidence" value="ECO:0000266"/>
    <property type="project" value="MGI"/>
</dbReference>
<dbReference type="GO" id="GO:0005886">
    <property type="term" value="C:plasma membrane"/>
    <property type="evidence" value="ECO:0000314"/>
    <property type="project" value="UniProtKB"/>
</dbReference>
<dbReference type="GO" id="GO:0015220">
    <property type="term" value="F:choline transmembrane transporter activity"/>
    <property type="evidence" value="ECO:0000250"/>
    <property type="project" value="UniProtKB"/>
</dbReference>
<dbReference type="GO" id="GO:0034228">
    <property type="term" value="F:ethanolamine transmembrane transporter activity"/>
    <property type="evidence" value="ECO:0000250"/>
    <property type="project" value="UniProtKB"/>
</dbReference>
<dbReference type="GO" id="GO:0170003">
    <property type="term" value="F:heme B transmembrane transporter activity"/>
    <property type="evidence" value="ECO:0000315"/>
    <property type="project" value="MGI"/>
</dbReference>
<dbReference type="GO" id="GO:0015232">
    <property type="term" value="F:heme transmembrane transporter activity"/>
    <property type="evidence" value="ECO:0007669"/>
    <property type="project" value="Ensembl"/>
</dbReference>
<dbReference type="GO" id="GO:0001568">
    <property type="term" value="P:blood vessel development"/>
    <property type="evidence" value="ECO:0000315"/>
    <property type="project" value="MGI"/>
</dbReference>
<dbReference type="GO" id="GO:0042733">
    <property type="term" value="P:embryonic digit morphogenesis"/>
    <property type="evidence" value="ECO:0000315"/>
    <property type="project" value="MGI"/>
</dbReference>
<dbReference type="GO" id="GO:0048704">
    <property type="term" value="P:embryonic skeletal system morphogenesis"/>
    <property type="evidence" value="ECO:0000315"/>
    <property type="project" value="MGI"/>
</dbReference>
<dbReference type="GO" id="GO:0030218">
    <property type="term" value="P:erythrocyte differentiation"/>
    <property type="evidence" value="ECO:0000315"/>
    <property type="project" value="MGI"/>
</dbReference>
<dbReference type="GO" id="GO:0043249">
    <property type="term" value="P:erythrocyte maturation"/>
    <property type="evidence" value="ECO:0007669"/>
    <property type="project" value="UniProtKB-KW"/>
</dbReference>
<dbReference type="GO" id="GO:0060323">
    <property type="term" value="P:head morphogenesis"/>
    <property type="evidence" value="ECO:0000315"/>
    <property type="project" value="MGI"/>
</dbReference>
<dbReference type="GO" id="GO:0006785">
    <property type="term" value="P:heme B biosynthetic process"/>
    <property type="evidence" value="ECO:0000315"/>
    <property type="project" value="MGI"/>
</dbReference>
<dbReference type="GO" id="GO:0097037">
    <property type="term" value="P:heme export"/>
    <property type="evidence" value="ECO:0000250"/>
    <property type="project" value="UniProtKB"/>
</dbReference>
<dbReference type="GO" id="GO:0015886">
    <property type="term" value="P:heme transport"/>
    <property type="evidence" value="ECO:0000266"/>
    <property type="project" value="MGI"/>
</dbReference>
<dbReference type="GO" id="GO:0001701">
    <property type="term" value="P:in utero embryonic development"/>
    <property type="evidence" value="ECO:0000315"/>
    <property type="project" value="MGI"/>
</dbReference>
<dbReference type="GO" id="GO:0035108">
    <property type="term" value="P:limb morphogenesis"/>
    <property type="evidence" value="ECO:0000315"/>
    <property type="project" value="MGI"/>
</dbReference>
<dbReference type="GO" id="GO:0006839">
    <property type="term" value="P:mitochondrial transport"/>
    <property type="evidence" value="ECO:0000266"/>
    <property type="project" value="MGI"/>
</dbReference>
<dbReference type="GO" id="GO:0035264">
    <property type="term" value="P:multicellular organism growth"/>
    <property type="evidence" value="ECO:0000315"/>
    <property type="project" value="MGI"/>
</dbReference>
<dbReference type="GO" id="GO:0008654">
    <property type="term" value="P:phospholipid biosynthetic process"/>
    <property type="evidence" value="ECO:0000250"/>
    <property type="project" value="UniProtKB"/>
</dbReference>
<dbReference type="GO" id="GO:0046620">
    <property type="term" value="P:regulation of organ growth"/>
    <property type="evidence" value="ECO:0000315"/>
    <property type="project" value="MGI"/>
</dbReference>
<dbReference type="GO" id="GO:0048536">
    <property type="term" value="P:spleen development"/>
    <property type="evidence" value="ECO:0000315"/>
    <property type="project" value="MGI"/>
</dbReference>
<dbReference type="FunFam" id="1.20.1250.20:FF:000184">
    <property type="entry name" value="Feline leukemia virus subgroup C receptor-related protein 1"/>
    <property type="match status" value="1"/>
</dbReference>
<dbReference type="Gene3D" id="1.20.1250.20">
    <property type="entry name" value="MFS general substrate transporter like domains"/>
    <property type="match status" value="1"/>
</dbReference>
<dbReference type="InterPro" id="IPR049680">
    <property type="entry name" value="FLVCR1-2_SLC49-like"/>
</dbReference>
<dbReference type="InterPro" id="IPR011701">
    <property type="entry name" value="MFS"/>
</dbReference>
<dbReference type="InterPro" id="IPR020846">
    <property type="entry name" value="MFS_dom"/>
</dbReference>
<dbReference type="InterPro" id="IPR036259">
    <property type="entry name" value="MFS_trans_sf"/>
</dbReference>
<dbReference type="PANTHER" id="PTHR10924:SF2">
    <property type="entry name" value="HEME TRANSPORTER FLVCR1"/>
    <property type="match status" value="1"/>
</dbReference>
<dbReference type="PANTHER" id="PTHR10924">
    <property type="entry name" value="MAJOR FACILITATOR SUPERFAMILY PROTEIN-RELATED"/>
    <property type="match status" value="1"/>
</dbReference>
<dbReference type="Pfam" id="PF07690">
    <property type="entry name" value="MFS_1"/>
    <property type="match status" value="1"/>
</dbReference>
<dbReference type="SUPFAM" id="SSF103473">
    <property type="entry name" value="MFS general substrate transporter"/>
    <property type="match status" value="1"/>
</dbReference>
<dbReference type="PROSITE" id="PS50850">
    <property type="entry name" value="MFS"/>
    <property type="match status" value="1"/>
</dbReference>
<comment type="function">
    <text evidence="1 4 5 7">Uniporter that mediates the transport of extracellular choline and ethanolamine into cells, thereby playing a key role in phospholipid biosynthesis (PubMed:37100056). Choline and ethanolamine are the precursors of phosphatidylcholine and phosphatidylethanolamine, respectively, the two most abundant phospholipids (By similarity). Transport is not coupled with proton transport and is exclusively driven by the choline (or ethanolamine) gradient across the plasma membrane (By similarity). Also acts as a heme b transporter that mediates heme efflux from the cytoplasm to the extracellular compartment (PubMed:18258918, PubMed:23187127).</text>
</comment>
<comment type="function">
    <molecule>Isoform 1</molecule>
    <text evidence="1 4 5">Uniporter that mediates the transport of extracellular choline and ethanolamine into cells (By similarity). Choline and ethanolamine are the precursors of phosphatidylcholine and phosphatidylethanolamine, respectively, the two most abundant phospholipids (By similarity). Transport is not coupled with proton transport and is exclusively driven by the choline (or ethanolamine) gradient across the plasma membrane (By similarity). Also acts as a heme b transporter that mediates heme efflux from the cytoplasm to the extracellular compartment (PubMed:18258918, PubMed:23187127). Heme export depends on the presence of HPX and is required to maintain intracellular free heme balance, protecting cells from heme toxicity (By similarity). Heme export provides protection from heme or ferrous iron toxicities in liver, brain, sensory neurons and during erythropoiesis, a process in which heme synthesis intensifies (By similarity). Possibly export coproporphyrin and protoporphyrin IX, which are both intermediate products in the heme biosynthetic pathway (By similarity). Does not export bilirubin. The molecular mechanism of heme transport, whether electrogenic, electroneutral or coupled to other ions, remains to be elucidated (By similarity).</text>
</comment>
<comment type="function">
    <molecule>Isoform 2</molecule>
    <text evidence="5">Heme transporter that promotes heme efflux from the mitochondrion to the cytoplasm. Essential for erythroid differentiation.</text>
</comment>
<comment type="catalytic activity">
    <reaction evidence="1">
        <text>choline(out) = choline(in)</text>
        <dbReference type="Rhea" id="RHEA:32751"/>
        <dbReference type="ChEBI" id="CHEBI:15354"/>
    </reaction>
</comment>
<comment type="catalytic activity">
    <reaction evidence="1">
        <text>ethanolamine(in) = ethanolamine(out)</text>
        <dbReference type="Rhea" id="RHEA:32747"/>
        <dbReference type="ChEBI" id="CHEBI:57603"/>
    </reaction>
</comment>
<comment type="catalytic activity">
    <reaction evidence="10">
        <text>heme b(in) = heme b(out)</text>
        <dbReference type="Rhea" id="RHEA:75443"/>
        <dbReference type="ChEBI" id="CHEBI:60344"/>
    </reaction>
</comment>
<comment type="catalytic activity">
    <molecule>Isoform 1</molecule>
    <reaction evidence="1">
        <text>choline(out) = choline(in)</text>
        <dbReference type="Rhea" id="RHEA:32751"/>
        <dbReference type="ChEBI" id="CHEBI:15354"/>
    </reaction>
</comment>
<comment type="catalytic activity">
    <molecule>Isoform 1</molecule>
    <reaction evidence="1">
        <text>ethanolamine(in) = ethanolamine(out)</text>
        <dbReference type="Rhea" id="RHEA:32747"/>
        <dbReference type="ChEBI" id="CHEBI:57603"/>
    </reaction>
</comment>
<comment type="catalytic activity">
    <molecule>Isoform 1</molecule>
    <reaction evidence="10">
        <text>heme b(in) = heme b(out)</text>
        <dbReference type="Rhea" id="RHEA:75443"/>
        <dbReference type="ChEBI" id="CHEBI:60344"/>
    </reaction>
</comment>
<comment type="catalytic activity">
    <molecule>Isoform 2</molecule>
    <reaction evidence="10">
        <text>heme b(in) = heme b(out)</text>
        <dbReference type="Rhea" id="RHEA:75443"/>
        <dbReference type="ChEBI" id="CHEBI:60344"/>
    </reaction>
</comment>
<comment type="subcellular location">
    <molecule>Isoform 1</molecule>
    <subcellularLocation>
        <location evidence="5">Cell membrane</location>
        <topology evidence="2">Multi-pass membrane protein</topology>
    </subcellularLocation>
</comment>
<comment type="subcellular location">
    <molecule>Isoform 2</molecule>
    <subcellularLocation>
        <location evidence="5">Mitochondrion membrane</location>
        <topology evidence="2">Multi-pass membrane protein</topology>
    </subcellularLocation>
    <text evidence="5">Colocalizes with HADHA.</text>
</comment>
<comment type="alternative products">
    <event type="alternative splicing"/>
    <isoform>
        <id>B2RXV4-1</id>
        <name>1</name>
        <name evidence="8">Flvcr1a</name>
        <sequence type="displayed"/>
    </isoform>
    <isoform>
        <id>B2RXV4-2</id>
        <name>2</name>
        <name>Flvcr1b</name>
        <name evidence="8">mitochondrial</name>
        <sequence type="described" ref="VSP_047867"/>
    </isoform>
</comment>
<comment type="disruption phenotype">
    <text evidence="4 5 6 7">Lack definitive erythropoiesis, have craniofacial and limb deformities, and die in midgestation (PubMed:18258918, PubMed:23187127, PubMed:37100056). Cells exhibit structural defects in mitochondria and upregulate integrated stress response (ISR) through EIF2AK1/HRI kinase (PubMed:37100056). Embryonic lethality can be partially rescued by choline supplementation (PubMed:37100056). Conditional deletion in hematopoietic stem cells does not affect hematopoietic stem cell function (PubMed:24021674). Mice with Flvcr1 that is deleted neonatally develop a severe macrocytic anemia with proerythroblast maturation arrest (PubMed:18258918).</text>
</comment>
<comment type="disruption phenotype">
    <molecule>Isoform 1</molecule>
    <text evidence="5">Mice lacking isoform 1 but expressing isoform 2 had normal erythropoiesis, but exhibited hemorrhages, edema, and skeletal abnormalities.</text>
</comment>
<comment type="miscellaneous">
    <molecule>Isoform 2</molecule>
    <text evidence="9">Has a probable mitochondrial transit peptide at positions 1-38.</text>
</comment>
<comment type="similarity">
    <text evidence="9">Belongs to the major facilitator superfamily. Feline leukemia virus subgroup C receptor (TC 2.A.1.28.1) family.</text>
</comment>
<reference key="1">
    <citation type="journal article" date="2009" name="PLoS Biol.">
        <title>Lineage-specific biology revealed by a finished genome assembly of the mouse.</title>
        <authorList>
            <person name="Church D.M."/>
            <person name="Goodstadt L."/>
            <person name="Hillier L.W."/>
            <person name="Zody M.C."/>
            <person name="Goldstein S."/>
            <person name="She X."/>
            <person name="Bult C.J."/>
            <person name="Agarwala R."/>
            <person name="Cherry J.L."/>
            <person name="DiCuccio M."/>
            <person name="Hlavina W."/>
            <person name="Kapustin Y."/>
            <person name="Meric P."/>
            <person name="Maglott D."/>
            <person name="Birtle Z."/>
            <person name="Marques A.C."/>
            <person name="Graves T."/>
            <person name="Zhou S."/>
            <person name="Teague B."/>
            <person name="Potamousis K."/>
            <person name="Churas C."/>
            <person name="Place M."/>
            <person name="Herschleb J."/>
            <person name="Runnheim R."/>
            <person name="Forrest D."/>
            <person name="Amos-Landgraf J."/>
            <person name="Schwartz D.C."/>
            <person name="Cheng Z."/>
            <person name="Lindblad-Toh K."/>
            <person name="Eichler E.E."/>
            <person name="Ponting C.P."/>
        </authorList>
    </citation>
    <scope>NUCLEOTIDE SEQUENCE [LARGE SCALE GENOMIC DNA]</scope>
    <source>
        <strain>C57BL/6J</strain>
    </source>
</reference>
<reference key="2">
    <citation type="journal article" date="2004" name="Genome Res.">
        <title>The status, quality, and expansion of the NIH full-length cDNA project: the Mammalian Gene Collection (MGC).</title>
        <authorList>
            <consortium name="The MGC Project Team"/>
        </authorList>
    </citation>
    <scope>NUCLEOTIDE SEQUENCE [LARGE SCALE MRNA] (ISOFORM 1)</scope>
    <source>
        <tissue>Brain</tissue>
    </source>
</reference>
<reference key="3">
    <citation type="journal article" date="2008" name="Science">
        <title>A heme export protein is required for red blood cell differentiation and iron homeostasis.</title>
        <authorList>
            <person name="Keel S.B."/>
            <person name="Doty R.T."/>
            <person name="Yang Z."/>
            <person name="Quigley J.G."/>
            <person name="Chen J."/>
            <person name="Knoblaugh S."/>
            <person name="Kingsley P.D."/>
            <person name="De Domenico I."/>
            <person name="Vaughn M.B."/>
            <person name="Kaplan J."/>
            <person name="Palis J."/>
            <person name="Abkowitz J.L."/>
        </authorList>
    </citation>
    <scope>FUNCTION (ISOFORM 1)</scope>
    <scope>DISRUPTION PHENOTYPE</scope>
</reference>
<reference key="4">
    <citation type="journal article" date="2012" name="J. Clin. Invest.">
        <title>The mitochondrial heme exporter FLVCR1b mediates erythroid differentiation.</title>
        <authorList>
            <person name="Chiabrando D."/>
            <person name="Marro S."/>
            <person name="Mercurio S."/>
            <person name="Giorgi C."/>
            <person name="Petrillo S."/>
            <person name="Vinchi F."/>
            <person name="Fiorito V."/>
            <person name="Fagoonee S."/>
            <person name="Camporeale A."/>
            <person name="Turco E."/>
            <person name="Merlo G.R."/>
            <person name="Silengo L."/>
            <person name="Altruda F."/>
            <person name="Pinton P."/>
            <person name="Tolosano E."/>
        </authorList>
    </citation>
    <scope>ALTERNATIVE SPLICING (ISOFORM 2)</scope>
    <scope>FUNCTION (ISOFORMS 1 AND 2)</scope>
    <scope>TRANSPORTER ACTIVITY (ISOFORMS 1 AND 2)</scope>
    <scope>SUBCELLULAR LOCATION (ISOFORMS 1 AND 2)</scope>
    <scope>DISRUPTION PHENOTYPE</scope>
</reference>
<reference key="5">
    <citation type="journal article" date="2013" name="Blood">
        <title>FLVCR is necessary for erythroid maturation, may contribute to platelet maturation, but is dispensable for normal hematopoietic stem cell function.</title>
        <authorList>
            <person name="Byon J.C."/>
            <person name="Chen J."/>
            <person name="Doty R.T."/>
            <person name="Abkowitz J.L."/>
        </authorList>
    </citation>
    <scope>DISRUPTION PHENOTYPE</scope>
</reference>
<reference key="6">
    <citation type="journal article" date="2023" name="Cell Metab.">
        <title>Integrative genetic analysis identifies FLVCR1 as a plasma-membrane choline transporter in mammals.</title>
        <authorList>
            <person name="Kenny T.C."/>
            <person name="Khan A."/>
            <person name="Son Y."/>
            <person name="Yue L."/>
            <person name="Heissel S."/>
            <person name="Sharma A."/>
            <person name="Pasolli H.A."/>
            <person name="Liu Y."/>
            <person name="Gamazon E.R."/>
            <person name="Alwaseem H."/>
            <person name="Hite R.K."/>
            <person name="Birsoy K."/>
        </authorList>
    </citation>
    <scope>FUNCTION</scope>
    <scope>DISRUPTION PHENOTYPE</scope>
</reference>
<sequence>MARPDDEVGPAVAPGHPLGKGYLPVPKGAPDGEARLVPQNGPEALNGGPGLGPLIAGAQGGPQALIAAEEETQARLLPAGDGEDVPCPACPPRTALSPRRFVVLLIFSLYSLVNAFQWIQYSSISNVFEDFYEVSPLHINWLSMVYMVAYVPLIFPATWLLDTRGLRLTALLGSGLNCLGAWVKCGSVQRHLFWVTMLGQILCSVAQVFILGLPSPVASVWFGPKEVSTACATAVLGNQLGTAVGFLLPPVLVPALGTQNSTGLLAHTQNNTDLLAHNINTMFYGTAFISTFLFFLTIIAFKEKPPLPPSQAQAVLRDSPPEEYSYKSSIWNLCRNIPFVLLLVSYGIMTGAFYSISTLLNQIILTYYVGEEVNAGRIGLTLVVAGMVGSILCGLWLDYTKTYKQTTLIVYVLSFIGMLIFTFTLNLGYIIVVFFTGGILGFFMTGYLPLGFEFAVEITYPESEGMSSGLLNTAAQILGIFFTLAQGKITTDYNSPEAGNIFLCAWMFVGIILTALIKSDLRRHNINTGLTNIDVKAVPVDSRVDPKPKVMVSIQSESSL</sequence>
<accession>B2RXV4</accession>
<protein>
    <recommendedName>
        <fullName>Choline/ethanolamine transporter FLVCR1</fullName>
    </recommendedName>
    <alternativeName>
        <fullName>Feline leukemia virus subgroup C receptor-related protein 1</fullName>
        <shortName evidence="1">Feline leukemia virus subgroup C receptor</shortName>
    </alternativeName>
    <alternativeName>
        <fullName evidence="1">Heme transporter FLVCR1</fullName>
    </alternativeName>
    <alternativeName>
        <fullName>Major facilitator superfamily domain containing 7B</fullName>
        <shortName>Mfsd7b</shortName>
    </alternativeName>
</protein>
<name>FLVC1_MOUSE</name>
<gene>
    <name type="primary">Flvcr1</name>
    <name type="synonym">Mfsd7b</name>
</gene>
<proteinExistence type="evidence at transcript level"/>